<accession>C5H5D6</accession>
<keyword id="KW-0053">Apoptosis</keyword>
<keyword id="KW-0106">Calcium</keyword>
<keyword id="KW-1217">Cell adhesion impairing toxin</keyword>
<keyword id="KW-1015">Disulfide bond</keyword>
<keyword id="KW-1206">Fibrinogenolytic toxin</keyword>
<keyword id="KW-0325">Glycoprotein</keyword>
<keyword id="KW-1200">Hemorrhagic toxin</keyword>
<keyword id="KW-1199">Hemostasis impairing toxin</keyword>
<keyword id="KW-0378">Hydrolase</keyword>
<keyword id="KW-0479">Metal-binding</keyword>
<keyword id="KW-0482">Metalloprotease</keyword>
<keyword id="KW-0645">Protease</keyword>
<keyword id="KW-0964">Secreted</keyword>
<keyword id="KW-0800">Toxin</keyword>
<keyword id="KW-0862">Zinc</keyword>
<sequence length="421" mass="46708">EQQKYLNAKKYVKLVLVADYIMYLKYGRSLTTLRTRMYDIVNIINLIFQRMNIHVALVGLEIWSNRDKIIVQSSADVTLDLFAKWRETDLLKRKSHDNAQLLTGINFNGPTAGLAYLSGICKPMYSAGIVQDHNKVHHLVAIAMAHEMGHNLGMDHDKDTCTCGARSCVMAGTLSCEPSYLFSDCSRREHRAFLIKDMPQCILEKPLRTDVVSPPVCGNYFVEVGEECDCGSPATCRDTCCDAATCKLRQGAQCAEGLCCDQCRFKGAGTECRAAKDECDMADLCTGRSAECTDRFQRNGQPCQNNNGYCYNGTCPIMRDQCIALFGPNAAVSQDACFQFNLQGNHYGYCRKEQNTKIACEPQDVKCGRLYCFPSSPATKNPCNIHYSPNDEDKGMVLPGTKCADGKACSNGRCVDVTTPY</sequence>
<organism>
    <name type="scientific">Lachesis muta rhombeata</name>
    <name type="common">Bushmaster</name>
    <dbReference type="NCBI Taxonomy" id="60219"/>
    <lineage>
        <taxon>Eukaryota</taxon>
        <taxon>Metazoa</taxon>
        <taxon>Chordata</taxon>
        <taxon>Craniata</taxon>
        <taxon>Vertebrata</taxon>
        <taxon>Euteleostomi</taxon>
        <taxon>Lepidosauria</taxon>
        <taxon>Squamata</taxon>
        <taxon>Bifurcata</taxon>
        <taxon>Unidentata</taxon>
        <taxon>Episquamata</taxon>
        <taxon>Toxicofera</taxon>
        <taxon>Serpentes</taxon>
        <taxon>Colubroidea</taxon>
        <taxon>Viperidae</taxon>
        <taxon>Crotalinae</taxon>
        <taxon>Lachesis</taxon>
    </lineage>
</organism>
<proteinExistence type="evidence at transcript level"/>
<evidence type="ECO:0000250" key="1"/>
<evidence type="ECO:0000255" key="2"/>
<evidence type="ECO:0000255" key="3">
    <source>
        <dbReference type="PROSITE-ProRule" id="PRU00068"/>
    </source>
</evidence>
<evidence type="ECO:0000255" key="4">
    <source>
        <dbReference type="PROSITE-ProRule" id="PRU00276"/>
    </source>
</evidence>
<evidence type="ECO:0000255" key="5">
    <source>
        <dbReference type="PROSITE-ProRule" id="PRU10095"/>
    </source>
</evidence>
<evidence type="ECO:0000305" key="6"/>
<feature type="chain" id="PRO_0000418204" description="Zinc metalloproteinase-disintegrin-like lachestatin-2">
    <location>
        <begin position="1"/>
        <end position="421"/>
    </location>
</feature>
<feature type="domain" description="Peptidase M12B" evidence="4">
    <location>
        <begin position="10"/>
        <end position="206"/>
    </location>
</feature>
<feature type="domain" description="Disintegrin" evidence="3">
    <location>
        <begin position="214"/>
        <end position="299"/>
    </location>
</feature>
<feature type="short sequence motif" description="D/ECD-tripeptide">
    <location>
        <begin position="278"/>
        <end position="280"/>
    </location>
</feature>
<feature type="active site" evidence="4 5">
    <location>
        <position position="147"/>
    </location>
</feature>
<feature type="binding site" evidence="1">
    <location>
        <position position="146"/>
    </location>
    <ligand>
        <name>Zn(2+)</name>
        <dbReference type="ChEBI" id="CHEBI:29105"/>
        <note>catalytic</note>
    </ligand>
</feature>
<feature type="binding site" evidence="1">
    <location>
        <position position="150"/>
    </location>
    <ligand>
        <name>Zn(2+)</name>
        <dbReference type="ChEBI" id="CHEBI:29105"/>
        <note>catalytic</note>
    </ligand>
</feature>
<feature type="binding site" evidence="1">
    <location>
        <position position="156"/>
    </location>
    <ligand>
        <name>Zn(2+)</name>
        <dbReference type="ChEBI" id="CHEBI:29105"/>
        <note>catalytic</note>
    </ligand>
</feature>
<feature type="binding site" evidence="1">
    <location>
        <position position="216"/>
    </location>
    <ligand>
        <name>Ca(2+)</name>
        <dbReference type="ChEBI" id="CHEBI:29108"/>
        <label>1</label>
    </ligand>
</feature>
<feature type="binding site" evidence="1">
    <location>
        <position position="219"/>
    </location>
    <ligand>
        <name>Ca(2+)</name>
        <dbReference type="ChEBI" id="CHEBI:29108"/>
        <label>1</label>
    </ligand>
</feature>
<feature type="binding site" evidence="1">
    <location>
        <position position="221"/>
    </location>
    <ligand>
        <name>Ca(2+)</name>
        <dbReference type="ChEBI" id="CHEBI:29108"/>
        <label>1</label>
    </ligand>
</feature>
<feature type="binding site" evidence="1">
    <location>
        <position position="223"/>
    </location>
    <ligand>
        <name>Ca(2+)</name>
        <dbReference type="ChEBI" id="CHEBI:29108"/>
        <label>1</label>
    </ligand>
</feature>
<feature type="binding site" evidence="1">
    <location>
        <position position="226"/>
    </location>
    <ligand>
        <name>Ca(2+)</name>
        <dbReference type="ChEBI" id="CHEBI:29108"/>
        <label>1</label>
    </ligand>
</feature>
<feature type="binding site" evidence="1">
    <location>
        <position position="229"/>
    </location>
    <ligand>
        <name>Ca(2+)</name>
        <dbReference type="ChEBI" id="CHEBI:29108"/>
        <label>1</label>
    </ligand>
</feature>
<feature type="binding site" evidence="1">
    <location>
        <position position="280"/>
    </location>
    <ligand>
        <name>Ca(2+)</name>
        <dbReference type="ChEBI" id="CHEBI:29108"/>
        <label>2</label>
    </ligand>
</feature>
<feature type="binding site" evidence="1">
    <location>
        <position position="281"/>
    </location>
    <ligand>
        <name>Ca(2+)</name>
        <dbReference type="ChEBI" id="CHEBI:29108"/>
        <label>2</label>
    </ligand>
</feature>
<feature type="binding site" evidence="1">
    <location>
        <position position="283"/>
    </location>
    <ligand>
        <name>Ca(2+)</name>
        <dbReference type="ChEBI" id="CHEBI:29108"/>
        <label>2</label>
    </ligand>
</feature>
<feature type="binding site" evidence="1">
    <location>
        <position position="294"/>
    </location>
    <ligand>
        <name>Ca(2+)</name>
        <dbReference type="ChEBI" id="CHEBI:29108"/>
        <label>2</label>
    </ligand>
</feature>
<feature type="binding site" evidence="1">
    <location>
        <position position="295"/>
    </location>
    <ligand>
        <name>Ca(2+)</name>
        <dbReference type="ChEBI" id="CHEBI:29108"/>
        <label>2</label>
    </ligand>
</feature>
<feature type="glycosylation site" description="N-linked (GlcNAc...) asparagine" evidence="2">
    <location>
        <position position="312"/>
    </location>
</feature>
<feature type="disulfide bond" evidence="1">
    <location>
        <begin position="121"/>
        <end position="201"/>
    </location>
</feature>
<feature type="disulfide bond" evidence="1">
    <location>
        <begin position="161"/>
        <end position="185"/>
    </location>
</feature>
<feature type="disulfide bond" evidence="1">
    <location>
        <begin position="163"/>
        <end position="168"/>
    </location>
</feature>
<feature type="disulfide bond" description="Interchain (with C-365)" evidence="3 4">
    <location>
        <position position="176"/>
    </location>
</feature>
<feature type="disulfide bond" evidence="1">
    <location>
        <begin position="217"/>
        <end position="246"/>
    </location>
</feature>
<feature type="disulfide bond" evidence="1">
    <location>
        <begin position="228"/>
        <end position="241"/>
    </location>
</feature>
<feature type="disulfide bond" evidence="1">
    <location>
        <begin position="230"/>
        <end position="236"/>
    </location>
</feature>
<feature type="disulfide bond" evidence="1">
    <location>
        <begin position="240"/>
        <end position="263"/>
    </location>
</feature>
<feature type="disulfide bond" evidence="1">
    <location>
        <begin position="254"/>
        <end position="260"/>
    </location>
</feature>
<feature type="disulfide bond" evidence="1">
    <location>
        <begin position="259"/>
        <end position="285"/>
    </location>
</feature>
<feature type="disulfide bond" evidence="1">
    <location>
        <begin position="272"/>
        <end position="292"/>
    </location>
</feature>
<feature type="disulfide bond" evidence="1">
    <location>
        <begin position="279"/>
        <end position="310"/>
    </location>
</feature>
<feature type="disulfide bond" evidence="1">
    <location>
        <begin position="303"/>
        <end position="315"/>
    </location>
</feature>
<feature type="disulfide bond" evidence="1">
    <location>
        <begin position="322"/>
        <end position="372"/>
    </location>
</feature>
<feature type="disulfide bond" evidence="1">
    <location>
        <begin position="337"/>
        <end position="383"/>
    </location>
</feature>
<feature type="disulfide bond" evidence="1">
    <location>
        <begin position="350"/>
        <end position="360"/>
    </location>
</feature>
<feature type="disulfide bond" evidence="1">
    <location>
        <begin position="367"/>
        <end position="409"/>
    </location>
</feature>
<feature type="disulfide bond" evidence="1">
    <location>
        <begin position="403"/>
        <end position="414"/>
    </location>
</feature>
<comment type="function">
    <text evidence="1">Snake venom zinc metalloprotease that induces apoptosis in vascular endothelial cells (VEC), without degrading the extracellular matrix (it cannot cleave collagen) or inhibiting adhesion of VEC. Has also fibrinogenolytic and hemorrhagic activities (By similarity).</text>
</comment>
<comment type="cofactor">
    <cofactor evidence="1">
        <name>Zn(2+)</name>
        <dbReference type="ChEBI" id="CHEBI:29105"/>
    </cofactor>
    <text evidence="1">Binds 1 zinc ion per subunit.</text>
</comment>
<comment type="subunit">
    <text evidence="1">Homodimer; disulfide-linked.</text>
</comment>
<comment type="subcellular location">
    <subcellularLocation>
        <location evidence="1">Secreted</location>
    </subcellularLocation>
</comment>
<comment type="tissue specificity">
    <text>Expressed by the venom gland.</text>
</comment>
<comment type="similarity">
    <text evidence="6">Belongs to the venom metalloproteinase (M12B) family. P-III subfamily. P-IIIc sub-subfamily.</text>
</comment>
<reference key="1">
    <citation type="journal article" date="2008" name="Toxicon">
        <title>Expression of mRNAs coding for VAP1/crotastatin-like metalloproteases in the venom glands of three South American pit vipers assessed by quantitative real-time PCR.</title>
        <authorList>
            <person name="Tavares N.A.C."/>
            <person name="Correia J.M."/>
            <person name="Guarnieri M.C."/>
            <person name="Lima-Filho J.L."/>
            <person name="Prieto-da-Silva A.R.B."/>
            <person name="Radis-Baptista G."/>
        </authorList>
    </citation>
    <scope>NUCLEOTIDE SEQUENCE [MRNA]</scope>
    <source>
        <tissue>Venom gland</tissue>
    </source>
</reference>
<dbReference type="EC" id="3.4.24.-"/>
<dbReference type="EMBL" id="EU733643">
    <property type="protein sequence ID" value="ACI02291.1"/>
    <property type="molecule type" value="mRNA"/>
</dbReference>
<dbReference type="SMR" id="C5H5D6"/>
<dbReference type="MEROPS" id="M12.315"/>
<dbReference type="GO" id="GO:0005576">
    <property type="term" value="C:extracellular region"/>
    <property type="evidence" value="ECO:0007669"/>
    <property type="project" value="UniProtKB-SubCell"/>
</dbReference>
<dbReference type="GO" id="GO:0005886">
    <property type="term" value="C:plasma membrane"/>
    <property type="evidence" value="ECO:0007669"/>
    <property type="project" value="TreeGrafter"/>
</dbReference>
<dbReference type="GO" id="GO:0046872">
    <property type="term" value="F:metal ion binding"/>
    <property type="evidence" value="ECO:0007669"/>
    <property type="project" value="UniProtKB-KW"/>
</dbReference>
<dbReference type="GO" id="GO:0004222">
    <property type="term" value="F:metalloendopeptidase activity"/>
    <property type="evidence" value="ECO:0007669"/>
    <property type="project" value="InterPro"/>
</dbReference>
<dbReference type="GO" id="GO:0090729">
    <property type="term" value="F:toxin activity"/>
    <property type="evidence" value="ECO:0007669"/>
    <property type="project" value="UniProtKB-KW"/>
</dbReference>
<dbReference type="GO" id="GO:0006915">
    <property type="term" value="P:apoptotic process"/>
    <property type="evidence" value="ECO:0007669"/>
    <property type="project" value="UniProtKB-KW"/>
</dbReference>
<dbReference type="GO" id="GO:0006508">
    <property type="term" value="P:proteolysis"/>
    <property type="evidence" value="ECO:0007669"/>
    <property type="project" value="UniProtKB-KW"/>
</dbReference>
<dbReference type="CDD" id="cd04269">
    <property type="entry name" value="ZnMc_adamalysin_II_like"/>
    <property type="match status" value="1"/>
</dbReference>
<dbReference type="FunFam" id="3.40.390.10:FF:000002">
    <property type="entry name" value="Disintegrin and metalloproteinase domain-containing protein 22"/>
    <property type="match status" value="1"/>
</dbReference>
<dbReference type="FunFam" id="4.10.70.10:FF:000001">
    <property type="entry name" value="Disintegrin and metalloproteinase domain-containing protein 22"/>
    <property type="match status" value="1"/>
</dbReference>
<dbReference type="Gene3D" id="3.40.390.10">
    <property type="entry name" value="Collagenase (Catalytic Domain)"/>
    <property type="match status" value="1"/>
</dbReference>
<dbReference type="Gene3D" id="4.10.70.10">
    <property type="entry name" value="Disintegrin domain"/>
    <property type="match status" value="1"/>
</dbReference>
<dbReference type="InterPro" id="IPR006586">
    <property type="entry name" value="ADAM_Cys-rich"/>
</dbReference>
<dbReference type="InterPro" id="IPR018358">
    <property type="entry name" value="Disintegrin_CS"/>
</dbReference>
<dbReference type="InterPro" id="IPR001762">
    <property type="entry name" value="Disintegrin_dom"/>
</dbReference>
<dbReference type="InterPro" id="IPR036436">
    <property type="entry name" value="Disintegrin_dom_sf"/>
</dbReference>
<dbReference type="InterPro" id="IPR024079">
    <property type="entry name" value="MetalloPept_cat_dom_sf"/>
</dbReference>
<dbReference type="InterPro" id="IPR001590">
    <property type="entry name" value="Peptidase_M12B"/>
</dbReference>
<dbReference type="InterPro" id="IPR034027">
    <property type="entry name" value="Reprolysin_adamalysin"/>
</dbReference>
<dbReference type="PANTHER" id="PTHR11905">
    <property type="entry name" value="ADAM A DISINTEGRIN AND METALLOPROTEASE DOMAIN"/>
    <property type="match status" value="1"/>
</dbReference>
<dbReference type="PANTHER" id="PTHR11905:SF32">
    <property type="entry name" value="DISINTEGRIN AND METALLOPROTEINASE DOMAIN-CONTAINING PROTEIN 28"/>
    <property type="match status" value="1"/>
</dbReference>
<dbReference type="Pfam" id="PF08516">
    <property type="entry name" value="ADAM_CR"/>
    <property type="match status" value="1"/>
</dbReference>
<dbReference type="Pfam" id="PF00200">
    <property type="entry name" value="Disintegrin"/>
    <property type="match status" value="1"/>
</dbReference>
<dbReference type="Pfam" id="PF01421">
    <property type="entry name" value="Reprolysin"/>
    <property type="match status" value="1"/>
</dbReference>
<dbReference type="PRINTS" id="PR00289">
    <property type="entry name" value="DISINTEGRIN"/>
</dbReference>
<dbReference type="SMART" id="SM00608">
    <property type="entry name" value="ACR"/>
    <property type="match status" value="1"/>
</dbReference>
<dbReference type="SMART" id="SM00050">
    <property type="entry name" value="DISIN"/>
    <property type="match status" value="1"/>
</dbReference>
<dbReference type="SUPFAM" id="SSF57552">
    <property type="entry name" value="Blood coagulation inhibitor (disintegrin)"/>
    <property type="match status" value="1"/>
</dbReference>
<dbReference type="SUPFAM" id="SSF55486">
    <property type="entry name" value="Metalloproteases ('zincins'), catalytic domain"/>
    <property type="match status" value="1"/>
</dbReference>
<dbReference type="PROSITE" id="PS50215">
    <property type="entry name" value="ADAM_MEPRO"/>
    <property type="match status" value="1"/>
</dbReference>
<dbReference type="PROSITE" id="PS00427">
    <property type="entry name" value="DISINTEGRIN_1"/>
    <property type="match status" value="1"/>
</dbReference>
<dbReference type="PROSITE" id="PS50214">
    <property type="entry name" value="DISINTEGRIN_2"/>
    <property type="match status" value="1"/>
</dbReference>
<dbReference type="PROSITE" id="PS00142">
    <property type="entry name" value="ZINC_PROTEASE"/>
    <property type="match status" value="1"/>
</dbReference>
<protein>
    <recommendedName>
        <fullName>Zinc metalloproteinase-disintegrin-like lachestatin-2</fullName>
        <ecNumber>3.4.24.-</ecNumber>
    </recommendedName>
    <alternativeName>
        <fullName>Snake venom metalloprotease</fullName>
        <shortName>SVMP</shortName>
    </alternativeName>
    <alternativeName>
        <fullName>Vascular apoptosis-inducing protein-like</fullName>
        <shortName>VAP-like</shortName>
    </alternativeName>
</protein>
<name>VM32_LACMR</name>